<feature type="chain" id="PRO_0000098339" description="Isoleucine--tRNA ligase">
    <location>
        <begin position="1"/>
        <end position="967"/>
    </location>
</feature>
<feature type="short sequence motif" description="'HIGH' region">
    <location>
        <begin position="64"/>
        <end position="74"/>
    </location>
</feature>
<feature type="short sequence motif" description="'KMSKS' region">
    <location>
        <begin position="641"/>
        <end position="645"/>
    </location>
</feature>
<feature type="binding site" evidence="1">
    <location>
        <position position="600"/>
    </location>
    <ligand>
        <name>L-isoleucyl-5'-AMP</name>
        <dbReference type="ChEBI" id="CHEBI:178002"/>
    </ligand>
</feature>
<feature type="binding site" evidence="1">
    <location>
        <position position="644"/>
    </location>
    <ligand>
        <name>ATP</name>
        <dbReference type="ChEBI" id="CHEBI:30616"/>
    </ligand>
</feature>
<accession>Q8UHJ6</accession>
<accession>Q7D0X7</accession>
<proteinExistence type="inferred from homology"/>
<evidence type="ECO:0000255" key="1">
    <source>
        <dbReference type="HAMAP-Rule" id="MF_02002"/>
    </source>
</evidence>
<sequence>MSDTAEKLDYSTTLYLPQTDFPMRAGLPQKEPETVKRWQDMGLYKKLRASAAGREKFVLHDGPPYANGNIHIGHALNKILKDVITRSFQMRGFDANYVPGWDCHGLPIEWKIEEAYRARGKNKDEVPVNEFRKECRDFAAGWIKVQSEEFKRLGIEGDFENPYTTMNFHAEARIAGELLKIARSGQLYRGSKPIMWSVVERTALAEAEVEYHDVESDMIWVKFPVKDAAPALSGVSVVIWTTTPWTIPGNRAIAFSSRVEYGLFEVESAQNDFGPQTGEKLIFARKLADEAAAKAKLTFKFVRDVKSEELAAITCAHPLASLGYDFPVPLLDGDHVTDDAGTGFVHTAPSHGREDFDAWTNSVRTLEARGIDTKIPFPVDDAGFYTEDAPGFGPSAEGGAARVMDDNGKKGDANERVIKALIAANNLFARGRLKHSYPHSWRSKKPVIFRNTPQWFVYMDKELGDGTTLRSRSLDAIDQTRFVPASGQNRLRAMIEGRPDWVLSRQRSWGVPIAVFADEQGEVLVDEAVNARILEAFEAEGADAWFAEGAKERFLGNDHDHAKWQQVMDILDVWFDSGCTHTFTLEDRPDMKWPADVYLEGSDQHRGWFHSSLLESCATRGRAPYNAVVTHGFTMDEQGRKQSKSLGNVVAPQDVMKESGADILRLWVMTTDYWEDQRLGKAIIQTNIDAYRKLRNTVRWMLGTLAHDNGEEIAYADLPELEKLVLHRLSELDKVVRDGYDAFDFKKITRALIDFANVELSAFYFDIRKDTLYCDAPSSLKRRASLSVIAKLFDCLVTWLAPMLPFTTEEAWLSRYPDAESVHLAQFPEIPAEWKNDALEAKWEKIRKVRTVVTGALEVERREKRIGSSLEAAPVVHIADSDLLAALSGQDFAEICITSAITVVGDEGPADGFRLQEVAKVVVEQKLAEGVKCARSWRITTDVGSDPQYPDVSARDAAALRELAALK</sequence>
<gene>
    <name evidence="1" type="primary">ileS</name>
    <name type="ordered locus">Atu0686</name>
    <name type="ORF">AGR_C_1230</name>
</gene>
<dbReference type="EC" id="6.1.1.5" evidence="1"/>
<dbReference type="EMBL" id="AE007869">
    <property type="protein sequence ID" value="AAK86495.1"/>
    <property type="molecule type" value="Genomic_DNA"/>
</dbReference>
<dbReference type="PIR" id="AH2660">
    <property type="entry name" value="AH2660"/>
</dbReference>
<dbReference type="PIR" id="F97442">
    <property type="entry name" value="F97442"/>
</dbReference>
<dbReference type="RefSeq" id="NP_353710.1">
    <property type="nucleotide sequence ID" value="NC_003062.2"/>
</dbReference>
<dbReference type="RefSeq" id="WP_010971068.1">
    <property type="nucleotide sequence ID" value="NC_003062.2"/>
</dbReference>
<dbReference type="SMR" id="Q8UHJ6"/>
<dbReference type="STRING" id="176299.Atu0686"/>
<dbReference type="EnsemblBacteria" id="AAK86495">
    <property type="protein sequence ID" value="AAK86495"/>
    <property type="gene ID" value="Atu0686"/>
</dbReference>
<dbReference type="GeneID" id="1138191"/>
<dbReference type="KEGG" id="atu:Atu0686"/>
<dbReference type="PATRIC" id="fig|176299.10.peg.682"/>
<dbReference type="eggNOG" id="COG0060">
    <property type="taxonomic scope" value="Bacteria"/>
</dbReference>
<dbReference type="HOGENOM" id="CLU_001493_7_1_5"/>
<dbReference type="OrthoDB" id="9810365at2"/>
<dbReference type="PhylomeDB" id="Q8UHJ6"/>
<dbReference type="BioCyc" id="AGRO:ATU0686-MONOMER"/>
<dbReference type="Proteomes" id="UP000000813">
    <property type="component" value="Chromosome circular"/>
</dbReference>
<dbReference type="GO" id="GO:0005829">
    <property type="term" value="C:cytosol"/>
    <property type="evidence" value="ECO:0007669"/>
    <property type="project" value="TreeGrafter"/>
</dbReference>
<dbReference type="GO" id="GO:0002161">
    <property type="term" value="F:aminoacyl-tRNA deacylase activity"/>
    <property type="evidence" value="ECO:0007669"/>
    <property type="project" value="InterPro"/>
</dbReference>
<dbReference type="GO" id="GO:0005524">
    <property type="term" value="F:ATP binding"/>
    <property type="evidence" value="ECO:0007669"/>
    <property type="project" value="UniProtKB-UniRule"/>
</dbReference>
<dbReference type="GO" id="GO:0004822">
    <property type="term" value="F:isoleucine-tRNA ligase activity"/>
    <property type="evidence" value="ECO:0007669"/>
    <property type="project" value="UniProtKB-UniRule"/>
</dbReference>
<dbReference type="GO" id="GO:0000049">
    <property type="term" value="F:tRNA binding"/>
    <property type="evidence" value="ECO:0007669"/>
    <property type="project" value="InterPro"/>
</dbReference>
<dbReference type="GO" id="GO:0006428">
    <property type="term" value="P:isoleucyl-tRNA aminoacylation"/>
    <property type="evidence" value="ECO:0007669"/>
    <property type="project" value="UniProtKB-UniRule"/>
</dbReference>
<dbReference type="CDD" id="cd07960">
    <property type="entry name" value="Anticodon_Ia_Ile_BEm"/>
    <property type="match status" value="1"/>
</dbReference>
<dbReference type="FunFam" id="3.40.50.620:FF:000042">
    <property type="entry name" value="Isoleucine--tRNA ligase"/>
    <property type="match status" value="1"/>
</dbReference>
<dbReference type="Gene3D" id="1.10.730.20">
    <property type="match status" value="1"/>
</dbReference>
<dbReference type="Gene3D" id="3.40.50.620">
    <property type="entry name" value="HUPs"/>
    <property type="match status" value="2"/>
</dbReference>
<dbReference type="Gene3D" id="1.10.10.830">
    <property type="entry name" value="Ile-tRNA synthetase CP2 domain-like"/>
    <property type="match status" value="1"/>
</dbReference>
<dbReference type="Gene3D" id="3.90.740.10">
    <property type="entry name" value="Valyl/Leucyl/Isoleucyl-tRNA synthetase, editing domain"/>
    <property type="match status" value="1"/>
</dbReference>
<dbReference type="HAMAP" id="MF_02002">
    <property type="entry name" value="Ile_tRNA_synth_type1"/>
    <property type="match status" value="1"/>
</dbReference>
<dbReference type="InterPro" id="IPR001412">
    <property type="entry name" value="aa-tRNA-synth_I_CS"/>
</dbReference>
<dbReference type="InterPro" id="IPR002300">
    <property type="entry name" value="aa-tRNA-synth_Ia"/>
</dbReference>
<dbReference type="InterPro" id="IPR033708">
    <property type="entry name" value="Anticodon_Ile_BEm"/>
</dbReference>
<dbReference type="InterPro" id="IPR002301">
    <property type="entry name" value="Ile-tRNA-ligase"/>
</dbReference>
<dbReference type="InterPro" id="IPR023585">
    <property type="entry name" value="Ile-tRNA-ligase_type1"/>
</dbReference>
<dbReference type="InterPro" id="IPR050081">
    <property type="entry name" value="Ile-tRNA_ligase"/>
</dbReference>
<dbReference type="InterPro" id="IPR013155">
    <property type="entry name" value="M/V/L/I-tRNA-synth_anticd-bd"/>
</dbReference>
<dbReference type="InterPro" id="IPR014729">
    <property type="entry name" value="Rossmann-like_a/b/a_fold"/>
</dbReference>
<dbReference type="InterPro" id="IPR009080">
    <property type="entry name" value="tRNAsynth_Ia_anticodon-bd"/>
</dbReference>
<dbReference type="InterPro" id="IPR009008">
    <property type="entry name" value="Val/Leu/Ile-tRNA-synth_edit"/>
</dbReference>
<dbReference type="NCBIfam" id="TIGR00392">
    <property type="entry name" value="ileS"/>
    <property type="match status" value="1"/>
</dbReference>
<dbReference type="PANTHER" id="PTHR42765:SF1">
    <property type="entry name" value="ISOLEUCINE--TRNA LIGASE, MITOCHONDRIAL"/>
    <property type="match status" value="1"/>
</dbReference>
<dbReference type="PANTHER" id="PTHR42765">
    <property type="entry name" value="SOLEUCYL-TRNA SYNTHETASE"/>
    <property type="match status" value="1"/>
</dbReference>
<dbReference type="Pfam" id="PF08264">
    <property type="entry name" value="Anticodon_1"/>
    <property type="match status" value="1"/>
</dbReference>
<dbReference type="Pfam" id="PF00133">
    <property type="entry name" value="tRNA-synt_1"/>
    <property type="match status" value="1"/>
</dbReference>
<dbReference type="PRINTS" id="PR00984">
    <property type="entry name" value="TRNASYNTHILE"/>
</dbReference>
<dbReference type="SUPFAM" id="SSF47323">
    <property type="entry name" value="Anticodon-binding domain of a subclass of class I aminoacyl-tRNA synthetases"/>
    <property type="match status" value="1"/>
</dbReference>
<dbReference type="SUPFAM" id="SSF52374">
    <property type="entry name" value="Nucleotidylyl transferase"/>
    <property type="match status" value="1"/>
</dbReference>
<dbReference type="SUPFAM" id="SSF50677">
    <property type="entry name" value="ValRS/IleRS/LeuRS editing domain"/>
    <property type="match status" value="1"/>
</dbReference>
<dbReference type="PROSITE" id="PS00178">
    <property type="entry name" value="AA_TRNA_LIGASE_I"/>
    <property type="match status" value="1"/>
</dbReference>
<organism>
    <name type="scientific">Agrobacterium fabrum (strain C58 / ATCC 33970)</name>
    <name type="common">Agrobacterium tumefaciens (strain C58)</name>
    <dbReference type="NCBI Taxonomy" id="176299"/>
    <lineage>
        <taxon>Bacteria</taxon>
        <taxon>Pseudomonadati</taxon>
        <taxon>Pseudomonadota</taxon>
        <taxon>Alphaproteobacteria</taxon>
        <taxon>Hyphomicrobiales</taxon>
        <taxon>Rhizobiaceae</taxon>
        <taxon>Rhizobium/Agrobacterium group</taxon>
        <taxon>Agrobacterium</taxon>
        <taxon>Agrobacterium tumefaciens complex</taxon>
    </lineage>
</organism>
<name>SYI_AGRFC</name>
<comment type="function">
    <text evidence="1">Catalyzes the attachment of isoleucine to tRNA(Ile). As IleRS can inadvertently accommodate and process structurally similar amino acids such as valine, to avoid such errors it has two additional distinct tRNA(Ile)-dependent editing activities. One activity is designated as 'pretransfer' editing and involves the hydrolysis of activated Val-AMP. The other activity is designated 'posttransfer' editing and involves deacylation of mischarged Val-tRNA(Ile).</text>
</comment>
<comment type="catalytic activity">
    <reaction evidence="1">
        <text>tRNA(Ile) + L-isoleucine + ATP = L-isoleucyl-tRNA(Ile) + AMP + diphosphate</text>
        <dbReference type="Rhea" id="RHEA:11060"/>
        <dbReference type="Rhea" id="RHEA-COMP:9666"/>
        <dbReference type="Rhea" id="RHEA-COMP:9695"/>
        <dbReference type="ChEBI" id="CHEBI:30616"/>
        <dbReference type="ChEBI" id="CHEBI:33019"/>
        <dbReference type="ChEBI" id="CHEBI:58045"/>
        <dbReference type="ChEBI" id="CHEBI:78442"/>
        <dbReference type="ChEBI" id="CHEBI:78528"/>
        <dbReference type="ChEBI" id="CHEBI:456215"/>
        <dbReference type="EC" id="6.1.1.5"/>
    </reaction>
</comment>
<comment type="subunit">
    <text evidence="1">Monomer.</text>
</comment>
<comment type="subcellular location">
    <subcellularLocation>
        <location evidence="1">Cytoplasm</location>
    </subcellularLocation>
</comment>
<comment type="domain">
    <text evidence="1">IleRS has two distinct active sites: one for aminoacylation and one for editing. The misactivated valine is translocated from the active site to the editing site, which sterically excludes the correctly activated isoleucine. The single editing site contains two valyl binding pockets, one specific for each substrate (Val-AMP or Val-tRNA(Ile)).</text>
</comment>
<comment type="similarity">
    <text evidence="1">Belongs to the class-I aminoacyl-tRNA synthetase family. IleS type 1 subfamily.</text>
</comment>
<protein>
    <recommendedName>
        <fullName evidence="1">Isoleucine--tRNA ligase</fullName>
        <ecNumber evidence="1">6.1.1.5</ecNumber>
    </recommendedName>
    <alternativeName>
        <fullName evidence="1">Isoleucyl-tRNA synthetase</fullName>
        <shortName evidence="1">IleRS</shortName>
    </alternativeName>
</protein>
<keyword id="KW-0030">Aminoacyl-tRNA synthetase</keyword>
<keyword id="KW-0067">ATP-binding</keyword>
<keyword id="KW-0963">Cytoplasm</keyword>
<keyword id="KW-0436">Ligase</keyword>
<keyword id="KW-0547">Nucleotide-binding</keyword>
<keyword id="KW-0648">Protein biosynthesis</keyword>
<keyword id="KW-1185">Reference proteome</keyword>
<reference key="1">
    <citation type="journal article" date="2001" name="Science">
        <title>The genome of the natural genetic engineer Agrobacterium tumefaciens C58.</title>
        <authorList>
            <person name="Wood D.W."/>
            <person name="Setubal J.C."/>
            <person name="Kaul R."/>
            <person name="Monks D.E."/>
            <person name="Kitajima J.P."/>
            <person name="Okura V.K."/>
            <person name="Zhou Y."/>
            <person name="Chen L."/>
            <person name="Wood G.E."/>
            <person name="Almeida N.F. Jr."/>
            <person name="Woo L."/>
            <person name="Chen Y."/>
            <person name="Paulsen I.T."/>
            <person name="Eisen J.A."/>
            <person name="Karp P.D."/>
            <person name="Bovee D. Sr."/>
            <person name="Chapman P."/>
            <person name="Clendenning J."/>
            <person name="Deatherage G."/>
            <person name="Gillet W."/>
            <person name="Grant C."/>
            <person name="Kutyavin T."/>
            <person name="Levy R."/>
            <person name="Li M.-J."/>
            <person name="McClelland E."/>
            <person name="Palmieri A."/>
            <person name="Raymond C."/>
            <person name="Rouse G."/>
            <person name="Saenphimmachak C."/>
            <person name="Wu Z."/>
            <person name="Romero P."/>
            <person name="Gordon D."/>
            <person name="Zhang S."/>
            <person name="Yoo H."/>
            <person name="Tao Y."/>
            <person name="Biddle P."/>
            <person name="Jung M."/>
            <person name="Krespan W."/>
            <person name="Perry M."/>
            <person name="Gordon-Kamm B."/>
            <person name="Liao L."/>
            <person name="Kim S."/>
            <person name="Hendrick C."/>
            <person name="Zhao Z.-Y."/>
            <person name="Dolan M."/>
            <person name="Chumley F."/>
            <person name="Tingey S.V."/>
            <person name="Tomb J.-F."/>
            <person name="Gordon M.P."/>
            <person name="Olson M.V."/>
            <person name="Nester E.W."/>
        </authorList>
    </citation>
    <scope>NUCLEOTIDE SEQUENCE [LARGE SCALE GENOMIC DNA]</scope>
    <source>
        <strain>C58 / ATCC 33970</strain>
    </source>
</reference>
<reference key="2">
    <citation type="journal article" date="2001" name="Science">
        <title>Genome sequence of the plant pathogen and biotechnology agent Agrobacterium tumefaciens C58.</title>
        <authorList>
            <person name="Goodner B."/>
            <person name="Hinkle G."/>
            <person name="Gattung S."/>
            <person name="Miller N."/>
            <person name="Blanchard M."/>
            <person name="Qurollo B."/>
            <person name="Goldman B.S."/>
            <person name="Cao Y."/>
            <person name="Askenazi M."/>
            <person name="Halling C."/>
            <person name="Mullin L."/>
            <person name="Houmiel K."/>
            <person name="Gordon J."/>
            <person name="Vaudin M."/>
            <person name="Iartchouk O."/>
            <person name="Epp A."/>
            <person name="Liu F."/>
            <person name="Wollam C."/>
            <person name="Allinger M."/>
            <person name="Doughty D."/>
            <person name="Scott C."/>
            <person name="Lappas C."/>
            <person name="Markelz B."/>
            <person name="Flanagan C."/>
            <person name="Crowell C."/>
            <person name="Gurson J."/>
            <person name="Lomo C."/>
            <person name="Sear C."/>
            <person name="Strub G."/>
            <person name="Cielo C."/>
            <person name="Slater S."/>
        </authorList>
    </citation>
    <scope>NUCLEOTIDE SEQUENCE [LARGE SCALE GENOMIC DNA]</scope>
    <source>
        <strain>C58 / ATCC 33970</strain>
    </source>
</reference>